<accession>Q94CD4</accession>
<accession>A0A1P8BBV2</accession>
<accession>Q9LYV7</accession>
<evidence type="ECO:0000250" key="1">
    <source>
        <dbReference type="UniProtKB" id="Q99732"/>
    </source>
</evidence>
<evidence type="ECO:0000255" key="2">
    <source>
        <dbReference type="PROSITE-ProRule" id="PRU01181"/>
    </source>
</evidence>
<evidence type="ECO:0000269" key="3">
    <source>
    </source>
</evidence>
<evidence type="ECO:0000303" key="4">
    <source>
    </source>
</evidence>
<evidence type="ECO:0000305" key="5"/>
<evidence type="ECO:0000305" key="6">
    <source>
    </source>
</evidence>
<evidence type="ECO:0000312" key="7">
    <source>
        <dbReference type="Araport" id="AT5G13190"/>
    </source>
</evidence>
<evidence type="ECO:0000312" key="8">
    <source>
        <dbReference type="EMBL" id="AED91862.1"/>
    </source>
</evidence>
<evidence type="ECO:0000312" key="9">
    <source>
        <dbReference type="EMBL" id="CAB86626.1"/>
    </source>
</evidence>
<gene>
    <name evidence="4" type="primary">GILP</name>
    <name evidence="7" type="ordered locus">At5g13190</name>
    <name evidence="8" type="ORF">T19L5.5</name>
    <name evidence="9" type="ORF">T31B5_10</name>
</gene>
<sequence length="134" mass="14560">MAKEGTTVIGVPYYAGQNPYQAGIVPPNAIYGDPLGAPIQQTIYRDTPAPFNCLYCGNTGLTNLRSKPGVAAVVACMMPFMLGFCFLCPSMDCLWNKQHHCPQCGNKVADFEKSDPCLVMDPPQWKQPSFALPA</sequence>
<organism>
    <name type="scientific">Arabidopsis thaliana</name>
    <name type="common">Mouse-ear cress</name>
    <dbReference type="NCBI Taxonomy" id="3702"/>
    <lineage>
        <taxon>Eukaryota</taxon>
        <taxon>Viridiplantae</taxon>
        <taxon>Streptophyta</taxon>
        <taxon>Embryophyta</taxon>
        <taxon>Tracheophyta</taxon>
        <taxon>Spermatophyta</taxon>
        <taxon>Magnoliopsida</taxon>
        <taxon>eudicotyledons</taxon>
        <taxon>Gunneridae</taxon>
        <taxon>Pentapetalae</taxon>
        <taxon>rosids</taxon>
        <taxon>malvids</taxon>
        <taxon>Brassicales</taxon>
        <taxon>Brassicaceae</taxon>
        <taxon>Camelineae</taxon>
        <taxon>Arabidopsis</taxon>
    </lineage>
</organism>
<dbReference type="EMBL" id="AL163491">
    <property type="protein sequence ID" value="CAB86626.1"/>
    <property type="status" value="ALT_SEQ"/>
    <property type="molecule type" value="Genomic_DNA"/>
</dbReference>
<dbReference type="EMBL" id="CP002688">
    <property type="protein sequence ID" value="AED91862.1"/>
    <property type="molecule type" value="Genomic_DNA"/>
</dbReference>
<dbReference type="EMBL" id="CP002688">
    <property type="protein sequence ID" value="ANM69073.1"/>
    <property type="status" value="ALT_SEQ"/>
    <property type="molecule type" value="Genomic_DNA"/>
</dbReference>
<dbReference type="EMBL" id="AY034946">
    <property type="protein sequence ID" value="AAK59452.1"/>
    <property type="molecule type" value="mRNA"/>
</dbReference>
<dbReference type="EMBL" id="AY062988">
    <property type="protein sequence ID" value="AAL34162.1"/>
    <property type="molecule type" value="mRNA"/>
</dbReference>
<dbReference type="EMBL" id="AY088302">
    <property type="protein sequence ID" value="AAM65841.1"/>
    <property type="molecule type" value="mRNA"/>
</dbReference>
<dbReference type="PIR" id="T48566">
    <property type="entry name" value="T48566"/>
</dbReference>
<dbReference type="RefSeq" id="NP_001330776.1">
    <property type="nucleotide sequence ID" value="NM_001343258.1"/>
</dbReference>
<dbReference type="RefSeq" id="NP_568286.1">
    <property type="nucleotide sequence ID" value="NM_121322.2"/>
</dbReference>
<dbReference type="FunCoup" id="Q94CD4">
    <property type="interactions" value="106"/>
</dbReference>
<dbReference type="IntAct" id="Q94CD4">
    <property type="interactions" value="2"/>
</dbReference>
<dbReference type="STRING" id="3702.Q94CD4"/>
<dbReference type="TCDB" id="9.B.230.1.1">
    <property type="family name" value="the gsh-induced litaf domain protein (gilp) family"/>
</dbReference>
<dbReference type="PaxDb" id="3702-AT5G13190.1"/>
<dbReference type="ProteomicsDB" id="221893"/>
<dbReference type="EnsemblPlants" id="AT5G13190.1">
    <property type="protein sequence ID" value="AT5G13190.1"/>
    <property type="gene ID" value="AT5G13190"/>
</dbReference>
<dbReference type="GeneID" id="831158"/>
<dbReference type="Gramene" id="AT5G13190.1">
    <property type="protein sequence ID" value="AT5G13190.1"/>
    <property type="gene ID" value="AT5G13190"/>
</dbReference>
<dbReference type="KEGG" id="ath:AT5G13190"/>
<dbReference type="Araport" id="AT5G13190"/>
<dbReference type="TAIR" id="AT5G13190">
    <property type="gene designation" value="GILP"/>
</dbReference>
<dbReference type="eggNOG" id="ENOG502S0H7">
    <property type="taxonomic scope" value="Eukaryota"/>
</dbReference>
<dbReference type="HOGENOM" id="CLU_131782_0_0_1"/>
<dbReference type="InParanoid" id="Q94CD4"/>
<dbReference type="OMA" id="WIQESFA"/>
<dbReference type="OrthoDB" id="1882956at2759"/>
<dbReference type="PhylomeDB" id="Q94CD4"/>
<dbReference type="PRO" id="PR:Q94CD4"/>
<dbReference type="Proteomes" id="UP000006548">
    <property type="component" value="Chromosome 5"/>
</dbReference>
<dbReference type="ExpressionAtlas" id="Q94CD4">
    <property type="expression patterns" value="baseline and differential"/>
</dbReference>
<dbReference type="GO" id="GO:0005886">
    <property type="term" value="C:plasma membrane"/>
    <property type="evidence" value="ECO:0000314"/>
    <property type="project" value="TAIR"/>
</dbReference>
<dbReference type="GO" id="GO:0046872">
    <property type="term" value="F:metal ion binding"/>
    <property type="evidence" value="ECO:0007669"/>
    <property type="project" value="UniProtKB-KW"/>
</dbReference>
<dbReference type="GO" id="GO:0071456">
    <property type="term" value="P:cellular response to hypoxia"/>
    <property type="evidence" value="ECO:0007007"/>
    <property type="project" value="TAIR"/>
</dbReference>
<dbReference type="GO" id="GO:0034051">
    <property type="term" value="P:negative regulation of plant-type hypersensitive response"/>
    <property type="evidence" value="ECO:0000315"/>
    <property type="project" value="TAIR"/>
</dbReference>
<dbReference type="InterPro" id="IPR006629">
    <property type="entry name" value="LITAF"/>
</dbReference>
<dbReference type="InterPro" id="IPR037519">
    <property type="entry name" value="LITAF_fam"/>
</dbReference>
<dbReference type="PANTHER" id="PTHR23292:SF6">
    <property type="entry name" value="FI16602P1-RELATED"/>
    <property type="match status" value="1"/>
</dbReference>
<dbReference type="PANTHER" id="PTHR23292">
    <property type="entry name" value="LIPOPOLYSACCHARIDE-INDUCED TUMOR NECROSIS FACTOR-ALPHA FACTOR"/>
    <property type="match status" value="1"/>
</dbReference>
<dbReference type="Pfam" id="PF10601">
    <property type="entry name" value="zf-LITAF-like"/>
    <property type="match status" value="1"/>
</dbReference>
<dbReference type="SMART" id="SM00714">
    <property type="entry name" value="LITAF"/>
    <property type="match status" value="1"/>
</dbReference>
<dbReference type="PROSITE" id="PS51837">
    <property type="entry name" value="LITAF"/>
    <property type="match status" value="1"/>
</dbReference>
<reference key="1">
    <citation type="journal article" date="2000" name="Nature">
        <title>Sequence and analysis of chromosome 5 of the plant Arabidopsis thaliana.</title>
        <authorList>
            <person name="Tabata S."/>
            <person name="Kaneko T."/>
            <person name="Nakamura Y."/>
            <person name="Kotani H."/>
            <person name="Kato T."/>
            <person name="Asamizu E."/>
            <person name="Miyajima N."/>
            <person name="Sasamoto S."/>
            <person name="Kimura T."/>
            <person name="Hosouchi T."/>
            <person name="Kawashima K."/>
            <person name="Kohara M."/>
            <person name="Matsumoto M."/>
            <person name="Matsuno A."/>
            <person name="Muraki A."/>
            <person name="Nakayama S."/>
            <person name="Nakazaki N."/>
            <person name="Naruo K."/>
            <person name="Okumura S."/>
            <person name="Shinpo S."/>
            <person name="Takeuchi C."/>
            <person name="Wada T."/>
            <person name="Watanabe A."/>
            <person name="Yamada M."/>
            <person name="Yasuda M."/>
            <person name="Sato S."/>
            <person name="de la Bastide M."/>
            <person name="Huang E."/>
            <person name="Spiegel L."/>
            <person name="Gnoj L."/>
            <person name="O'Shaughnessy A."/>
            <person name="Preston R."/>
            <person name="Habermann K."/>
            <person name="Murray J."/>
            <person name="Johnson D."/>
            <person name="Rohlfing T."/>
            <person name="Nelson J."/>
            <person name="Stoneking T."/>
            <person name="Pepin K."/>
            <person name="Spieth J."/>
            <person name="Sekhon M."/>
            <person name="Armstrong J."/>
            <person name="Becker M."/>
            <person name="Belter E."/>
            <person name="Cordum H."/>
            <person name="Cordes M."/>
            <person name="Courtney L."/>
            <person name="Courtney W."/>
            <person name="Dante M."/>
            <person name="Du H."/>
            <person name="Edwards J."/>
            <person name="Fryman J."/>
            <person name="Haakensen B."/>
            <person name="Lamar E."/>
            <person name="Latreille P."/>
            <person name="Leonard S."/>
            <person name="Meyer R."/>
            <person name="Mulvaney E."/>
            <person name="Ozersky P."/>
            <person name="Riley A."/>
            <person name="Strowmatt C."/>
            <person name="Wagner-McPherson C."/>
            <person name="Wollam A."/>
            <person name="Yoakum M."/>
            <person name="Bell M."/>
            <person name="Dedhia N."/>
            <person name="Parnell L."/>
            <person name="Shah R."/>
            <person name="Rodriguez M."/>
            <person name="Hoon See L."/>
            <person name="Vil D."/>
            <person name="Baker J."/>
            <person name="Kirchoff K."/>
            <person name="Toth K."/>
            <person name="King L."/>
            <person name="Bahret A."/>
            <person name="Miller B."/>
            <person name="Marra M.A."/>
            <person name="Martienssen R."/>
            <person name="McCombie W.R."/>
            <person name="Wilson R.K."/>
            <person name="Murphy G."/>
            <person name="Bancroft I."/>
            <person name="Volckaert G."/>
            <person name="Wambutt R."/>
            <person name="Duesterhoeft A."/>
            <person name="Stiekema W."/>
            <person name="Pohl T."/>
            <person name="Entian K.-D."/>
            <person name="Terryn N."/>
            <person name="Hartley N."/>
            <person name="Bent E."/>
            <person name="Johnson S."/>
            <person name="Langham S.-A."/>
            <person name="McCullagh B."/>
            <person name="Robben J."/>
            <person name="Grymonprez B."/>
            <person name="Zimmermann W."/>
            <person name="Ramsperger U."/>
            <person name="Wedler H."/>
            <person name="Balke K."/>
            <person name="Wedler E."/>
            <person name="Peters S."/>
            <person name="van Staveren M."/>
            <person name="Dirkse W."/>
            <person name="Mooijman P."/>
            <person name="Klein Lankhorst R."/>
            <person name="Weitzenegger T."/>
            <person name="Bothe G."/>
            <person name="Rose M."/>
            <person name="Hauf J."/>
            <person name="Berneiser S."/>
            <person name="Hempel S."/>
            <person name="Feldpausch M."/>
            <person name="Lamberth S."/>
            <person name="Villarroel R."/>
            <person name="Gielen J."/>
            <person name="Ardiles W."/>
            <person name="Bents O."/>
            <person name="Lemcke K."/>
            <person name="Kolesov G."/>
            <person name="Mayer K.F.X."/>
            <person name="Rudd S."/>
            <person name="Schoof H."/>
            <person name="Schueller C."/>
            <person name="Zaccaria P."/>
            <person name="Mewes H.-W."/>
            <person name="Bevan M."/>
            <person name="Fransz P.F."/>
        </authorList>
    </citation>
    <scope>NUCLEOTIDE SEQUENCE [LARGE SCALE GENOMIC DNA]</scope>
    <source>
        <strain>cv. Columbia</strain>
    </source>
</reference>
<reference key="2">
    <citation type="journal article" date="2017" name="Plant J.">
        <title>Araport11: a complete reannotation of the Arabidopsis thaliana reference genome.</title>
        <authorList>
            <person name="Cheng C.Y."/>
            <person name="Krishnakumar V."/>
            <person name="Chan A.P."/>
            <person name="Thibaud-Nissen F."/>
            <person name="Schobel S."/>
            <person name="Town C.D."/>
        </authorList>
    </citation>
    <scope>GENOME REANNOTATION</scope>
    <source>
        <strain>cv. Columbia</strain>
    </source>
</reference>
<reference key="3">
    <citation type="journal article" date="2003" name="Science">
        <title>Empirical analysis of transcriptional activity in the Arabidopsis genome.</title>
        <authorList>
            <person name="Yamada K."/>
            <person name="Lim J."/>
            <person name="Dale J.M."/>
            <person name="Chen H."/>
            <person name="Shinn P."/>
            <person name="Palm C.J."/>
            <person name="Southwick A.M."/>
            <person name="Wu H.C."/>
            <person name="Kim C.J."/>
            <person name="Nguyen M."/>
            <person name="Pham P.K."/>
            <person name="Cheuk R.F."/>
            <person name="Karlin-Newmann G."/>
            <person name="Liu S.X."/>
            <person name="Lam B."/>
            <person name="Sakano H."/>
            <person name="Wu T."/>
            <person name="Yu G."/>
            <person name="Miranda M."/>
            <person name="Quach H.L."/>
            <person name="Tripp M."/>
            <person name="Chang C.H."/>
            <person name="Lee J.M."/>
            <person name="Toriumi M.J."/>
            <person name="Chan M.M."/>
            <person name="Tang C.C."/>
            <person name="Onodera C.S."/>
            <person name="Deng J.M."/>
            <person name="Akiyama K."/>
            <person name="Ansari Y."/>
            <person name="Arakawa T."/>
            <person name="Banh J."/>
            <person name="Banno F."/>
            <person name="Bowser L."/>
            <person name="Brooks S.Y."/>
            <person name="Carninci P."/>
            <person name="Chao Q."/>
            <person name="Choy N."/>
            <person name="Enju A."/>
            <person name="Goldsmith A.D."/>
            <person name="Gurjal M."/>
            <person name="Hansen N.F."/>
            <person name="Hayashizaki Y."/>
            <person name="Johnson-Hopson C."/>
            <person name="Hsuan V.W."/>
            <person name="Iida K."/>
            <person name="Karnes M."/>
            <person name="Khan S."/>
            <person name="Koesema E."/>
            <person name="Ishida J."/>
            <person name="Jiang P.X."/>
            <person name="Jones T."/>
            <person name="Kawai J."/>
            <person name="Kamiya A."/>
            <person name="Meyers C."/>
            <person name="Nakajima M."/>
            <person name="Narusaka M."/>
            <person name="Seki M."/>
            <person name="Sakurai T."/>
            <person name="Satou M."/>
            <person name="Tamse R."/>
            <person name="Vaysberg M."/>
            <person name="Wallender E.K."/>
            <person name="Wong C."/>
            <person name="Yamamura Y."/>
            <person name="Yuan S."/>
            <person name="Shinozaki K."/>
            <person name="Davis R.W."/>
            <person name="Theologis A."/>
            <person name="Ecker J.R."/>
        </authorList>
    </citation>
    <scope>NUCLEOTIDE SEQUENCE [LARGE SCALE MRNA]</scope>
    <source>
        <strain>cv. Columbia</strain>
    </source>
</reference>
<reference key="4">
    <citation type="submission" date="2002-03" db="EMBL/GenBank/DDBJ databases">
        <title>Full-length cDNA from Arabidopsis thaliana.</title>
        <authorList>
            <person name="Brover V.V."/>
            <person name="Troukhan M.E."/>
            <person name="Alexandrov N.A."/>
            <person name="Lu Y.-P."/>
            <person name="Flavell R.B."/>
            <person name="Feldmann K.A."/>
        </authorList>
    </citation>
    <scope>NUCLEOTIDE SEQUENCE [LARGE SCALE MRNA]</scope>
</reference>
<reference key="5">
    <citation type="journal article" date="2011" name="PLoS ONE">
        <title>The LSD1-interacting protein GILP is a LITAF domain protein that negatively regulates hypersensitive cell death in Arabidopsis.</title>
        <authorList>
            <person name="He S."/>
            <person name="Tan G."/>
            <person name="Liu Q."/>
            <person name="Huang K."/>
            <person name="Ren J."/>
            <person name="Zhang X."/>
            <person name="Yu X."/>
            <person name="Huang P."/>
            <person name="An C."/>
        </authorList>
    </citation>
    <scope>FUNCTION</scope>
    <scope>INTERACTION WITH LSD1 AND MIEL1</scope>
    <scope>SUBCELLULAR LOCATION</scope>
    <scope>DOMAIN</scope>
    <scope>INDUCTION BY FUMONISIN B1 AND AVIRULENT PATHOGEN</scope>
</reference>
<proteinExistence type="evidence at protein level"/>
<feature type="chain" id="PRO_0000440615" description="GSH-induced LITAF domain protein">
    <location>
        <begin position="1"/>
        <end position="134"/>
    </location>
</feature>
<feature type="domain" description="LITAF" evidence="2">
    <location>
        <begin position="33"/>
        <end position="113"/>
    </location>
</feature>
<feature type="region of interest" description="Membrane-binding amphipathic helix" evidence="6">
    <location>
        <begin position="68"/>
        <end position="88"/>
    </location>
</feature>
<feature type="binding site" evidence="1">
    <location>
        <position position="53"/>
    </location>
    <ligand>
        <name>Zn(2+)</name>
        <dbReference type="ChEBI" id="CHEBI:29105"/>
    </ligand>
</feature>
<feature type="binding site" evidence="1">
    <location>
        <position position="56"/>
    </location>
    <ligand>
        <name>Zn(2+)</name>
        <dbReference type="ChEBI" id="CHEBI:29105"/>
    </ligand>
</feature>
<feature type="binding site" evidence="1">
    <location>
        <position position="101"/>
    </location>
    <ligand>
        <name>Zn(2+)</name>
        <dbReference type="ChEBI" id="CHEBI:29105"/>
    </ligand>
</feature>
<feature type="binding site" evidence="1">
    <location>
        <position position="104"/>
    </location>
    <ligand>
        <name>Zn(2+)</name>
        <dbReference type="ChEBI" id="CHEBI:29105"/>
    </ligand>
</feature>
<name>GILP_ARATH</name>
<protein>
    <recommendedName>
        <fullName evidence="4">GSH-induced LITAF domain protein</fullName>
        <shortName evidence="4">AtGILP</shortName>
    </recommendedName>
</protein>
<comment type="function">
    <text evidence="3">Acts as a membrane anchor, bringing other regulators of programmed cell death (PCD) to the plasma membrane. Negatively regulates hypersensitive cell death.</text>
</comment>
<comment type="subunit">
    <text evidence="3">Interacts (via N- and C-terminal) with MIEL1 and LSD1 (via N-terminus).</text>
</comment>
<comment type="interaction">
    <interactant intactId="EBI-6274018">
        <id>Q94CD4</id>
    </interactant>
    <interactant intactId="EBI-5849461">
        <id>P94077</id>
        <label>LSD1</label>
    </interactant>
    <organismsDiffer>false</organismsDiffer>
    <experiments>3</experiments>
</comment>
<comment type="subcellular location">
    <subcellularLocation>
        <location evidence="3">Cell membrane</location>
        <topology evidence="3">Peripheral membrane protein</topology>
        <orientation evidence="3">Cytoplasmic side</orientation>
    </subcellularLocation>
</comment>
<comment type="induction">
    <text evidence="3">Up-regulated by Pseudomonas syringae avrRpt2 and fumonisin B1 (FB1).</text>
</comment>
<comment type="domain">
    <text evidence="1 3">The LITAF domain is stabilized by a bound zinc ion (By similarity). The LITAF amphipathic helix region (68-90) is necessary for plasma membrane localization.</text>
</comment>
<comment type="domain">
    <text evidence="3">Both N-terminal (1-47) and C-terminal (114-134) domains are sufficient for the interaction with MIEL1 or with the N-terminal domain of LSD1.</text>
</comment>
<comment type="domain">
    <text evidence="3">The LITAF domain (48-113) is not involved in the interaction with LSD1.</text>
</comment>
<comment type="similarity">
    <text evidence="5">Belongs to the CDIP1/LITAF family.</text>
</comment>
<comment type="sequence caution" evidence="5">
    <conflict type="erroneous gene model prediction">
        <sequence resource="EMBL-CDS" id="ANM69073"/>
    </conflict>
</comment>
<comment type="sequence caution" evidence="5">
    <conflict type="erroneous gene model prediction">
        <sequence resource="EMBL-CDS" id="CAB86626"/>
    </conflict>
</comment>
<keyword id="KW-1003">Cell membrane</keyword>
<keyword id="KW-0472">Membrane</keyword>
<keyword id="KW-0479">Metal-binding</keyword>
<keyword id="KW-1185">Reference proteome</keyword>
<keyword id="KW-0862">Zinc</keyword>